<proteinExistence type="evidence at protein level"/>
<name>WNT7B_HUMAN</name>
<dbReference type="EMBL" id="AB062766">
    <property type="protein sequence ID" value="BAB68399.1"/>
    <property type="molecule type" value="mRNA"/>
</dbReference>
<dbReference type="EMBL" id="AF416743">
    <property type="protein sequence ID" value="AAN32640.1"/>
    <property type="molecule type" value="mRNA"/>
</dbReference>
<dbReference type="EMBL" id="BX511035">
    <property type="status" value="NOT_ANNOTATED_CDS"/>
    <property type="molecule type" value="Genomic_DNA"/>
</dbReference>
<dbReference type="EMBL" id="CR536603">
    <property type="status" value="NOT_ANNOTATED_CDS"/>
    <property type="molecule type" value="Genomic_DNA"/>
</dbReference>
<dbReference type="EMBL" id="BC034923">
    <property type="protein sequence ID" value="AAH34923.1"/>
    <property type="molecule type" value="mRNA"/>
</dbReference>
<dbReference type="CCDS" id="CCDS33667.1"/>
<dbReference type="RefSeq" id="NP_478679.1">
    <property type="nucleotide sequence ID" value="NM_058238.3"/>
</dbReference>
<dbReference type="SMR" id="P56706"/>
<dbReference type="BioGRID" id="113314">
    <property type="interactions" value="10"/>
</dbReference>
<dbReference type="FunCoup" id="P56706">
    <property type="interactions" value="544"/>
</dbReference>
<dbReference type="IntAct" id="P56706">
    <property type="interactions" value="8"/>
</dbReference>
<dbReference type="STRING" id="9606.ENSP00000341032"/>
<dbReference type="GlyCosmos" id="P56706">
    <property type="glycosylation" value="3 sites, No reported glycans"/>
</dbReference>
<dbReference type="GlyGen" id="P56706">
    <property type="glycosylation" value="4 sites, 3 N-linked glycans (1 site)"/>
</dbReference>
<dbReference type="iPTMnet" id="P56706"/>
<dbReference type="PhosphoSitePlus" id="P56706"/>
<dbReference type="BioMuta" id="WNT7B"/>
<dbReference type="DMDM" id="20532426"/>
<dbReference type="jPOST" id="P56706"/>
<dbReference type="MassIVE" id="P56706"/>
<dbReference type="PaxDb" id="9606-ENSP00000341032"/>
<dbReference type="PeptideAtlas" id="P56706"/>
<dbReference type="ProteomicsDB" id="56939"/>
<dbReference type="Antibodypedia" id="27975">
    <property type="antibodies" value="98 antibodies from 22 providers"/>
</dbReference>
<dbReference type="DNASU" id="7477"/>
<dbReference type="Ensembl" id="ENST00000339464.9">
    <property type="protein sequence ID" value="ENSP00000341032.4"/>
    <property type="gene ID" value="ENSG00000188064.10"/>
</dbReference>
<dbReference type="GeneID" id="7477"/>
<dbReference type="KEGG" id="hsa:7477"/>
<dbReference type="MANE-Select" id="ENST00000339464.9">
    <property type="protein sequence ID" value="ENSP00000341032.4"/>
    <property type="RefSeq nucleotide sequence ID" value="NM_058238.3"/>
    <property type="RefSeq protein sequence ID" value="NP_478679.1"/>
</dbReference>
<dbReference type="UCSC" id="uc003bgo.4">
    <property type="organism name" value="human"/>
</dbReference>
<dbReference type="AGR" id="HGNC:12787"/>
<dbReference type="CTD" id="7477"/>
<dbReference type="DisGeNET" id="7477"/>
<dbReference type="GeneCards" id="WNT7B"/>
<dbReference type="HGNC" id="HGNC:12787">
    <property type="gene designation" value="WNT7B"/>
</dbReference>
<dbReference type="HPA" id="ENSG00000188064">
    <property type="expression patterns" value="Tissue enhanced (brain, esophagus, skin)"/>
</dbReference>
<dbReference type="MalaCards" id="WNT7B"/>
<dbReference type="MIM" id="601967">
    <property type="type" value="gene"/>
</dbReference>
<dbReference type="neXtProt" id="NX_P56706"/>
<dbReference type="OpenTargets" id="ENSG00000188064"/>
<dbReference type="Orphanet" id="2470">
    <property type="disease" value="Matthew-Wood syndrome"/>
</dbReference>
<dbReference type="PharmGKB" id="PA37388"/>
<dbReference type="VEuPathDB" id="HostDB:ENSG00000188064"/>
<dbReference type="eggNOG" id="KOG3913">
    <property type="taxonomic scope" value="Eukaryota"/>
</dbReference>
<dbReference type="GeneTree" id="ENSGT00940000158861"/>
<dbReference type="InParanoid" id="P56706"/>
<dbReference type="OMA" id="CKVHCET"/>
<dbReference type="OrthoDB" id="5945655at2759"/>
<dbReference type="PAN-GO" id="P56706">
    <property type="GO annotations" value="7 GO annotations based on evolutionary models"/>
</dbReference>
<dbReference type="PhylomeDB" id="P56706"/>
<dbReference type="TreeFam" id="TF105310"/>
<dbReference type="PathwayCommons" id="P56706"/>
<dbReference type="Reactome" id="R-HSA-3238698">
    <property type="pathway name" value="WNT ligand biogenesis and trafficking"/>
</dbReference>
<dbReference type="Reactome" id="R-HSA-373080">
    <property type="pathway name" value="Class B/2 (Secretin family receptors)"/>
</dbReference>
<dbReference type="SignaLink" id="P56706"/>
<dbReference type="SIGNOR" id="P56706"/>
<dbReference type="BioGRID-ORCS" id="7477">
    <property type="hits" value="16 hits in 1147 CRISPR screens"/>
</dbReference>
<dbReference type="ChiTaRS" id="WNT7B">
    <property type="organism name" value="human"/>
</dbReference>
<dbReference type="GeneWiki" id="WNT7B"/>
<dbReference type="GenomeRNAi" id="7477"/>
<dbReference type="Pharos" id="P56706">
    <property type="development level" value="Tbio"/>
</dbReference>
<dbReference type="PRO" id="PR:P56706"/>
<dbReference type="Proteomes" id="UP000005640">
    <property type="component" value="Chromosome 22"/>
</dbReference>
<dbReference type="RNAct" id="P56706">
    <property type="molecule type" value="protein"/>
</dbReference>
<dbReference type="Bgee" id="ENSG00000188064">
    <property type="expression patterns" value="Expressed in vena cava and 98 other cell types or tissues"/>
</dbReference>
<dbReference type="ExpressionAtlas" id="P56706">
    <property type="expression patterns" value="baseline and differential"/>
</dbReference>
<dbReference type="GO" id="GO:0030666">
    <property type="term" value="C:endocytic vesicle membrane"/>
    <property type="evidence" value="ECO:0000304"/>
    <property type="project" value="Reactome"/>
</dbReference>
<dbReference type="GO" id="GO:0005788">
    <property type="term" value="C:endoplasmic reticulum lumen"/>
    <property type="evidence" value="ECO:0000304"/>
    <property type="project" value="Reactome"/>
</dbReference>
<dbReference type="GO" id="GO:0070062">
    <property type="term" value="C:extracellular exosome"/>
    <property type="evidence" value="ECO:0000304"/>
    <property type="project" value="Reactome"/>
</dbReference>
<dbReference type="GO" id="GO:0005576">
    <property type="term" value="C:extracellular region"/>
    <property type="evidence" value="ECO:0000304"/>
    <property type="project" value="Reactome"/>
</dbReference>
<dbReference type="GO" id="GO:0005615">
    <property type="term" value="C:extracellular space"/>
    <property type="evidence" value="ECO:0000318"/>
    <property type="project" value="GO_Central"/>
</dbReference>
<dbReference type="GO" id="GO:0005796">
    <property type="term" value="C:Golgi lumen"/>
    <property type="evidence" value="ECO:0000304"/>
    <property type="project" value="Reactome"/>
</dbReference>
<dbReference type="GO" id="GO:0005886">
    <property type="term" value="C:plasma membrane"/>
    <property type="evidence" value="ECO:0000304"/>
    <property type="project" value="Reactome"/>
</dbReference>
<dbReference type="GO" id="GO:0005125">
    <property type="term" value="F:cytokine activity"/>
    <property type="evidence" value="ECO:0000318"/>
    <property type="project" value="GO_Central"/>
</dbReference>
<dbReference type="GO" id="GO:0005109">
    <property type="term" value="F:frizzled binding"/>
    <property type="evidence" value="ECO:0000318"/>
    <property type="project" value="GO_Central"/>
</dbReference>
<dbReference type="GO" id="GO:0048018">
    <property type="term" value="F:receptor ligand activity"/>
    <property type="evidence" value="ECO:0000314"/>
    <property type="project" value="WormBase"/>
</dbReference>
<dbReference type="GO" id="GO:0060070">
    <property type="term" value="P:canonical Wnt signaling pathway"/>
    <property type="evidence" value="ECO:0000314"/>
    <property type="project" value="WormBase"/>
</dbReference>
<dbReference type="GO" id="GO:0045165">
    <property type="term" value="P:cell fate commitment"/>
    <property type="evidence" value="ECO:0000318"/>
    <property type="project" value="GO_Central"/>
</dbReference>
<dbReference type="GO" id="GO:0071300">
    <property type="term" value="P:cellular response to retinoic acid"/>
    <property type="evidence" value="ECO:0000270"/>
    <property type="project" value="UniProtKB"/>
</dbReference>
<dbReference type="GO" id="GO:0022009">
    <property type="term" value="P:central nervous system vasculogenesis"/>
    <property type="evidence" value="ECO:0000250"/>
    <property type="project" value="UniProtKB"/>
</dbReference>
<dbReference type="GO" id="GO:0036516">
    <property type="term" value="P:chemoattraction of dopaminergic neuron axon"/>
    <property type="evidence" value="ECO:0000250"/>
    <property type="project" value="ParkinsonsUK-UCL"/>
</dbReference>
<dbReference type="GO" id="GO:0060710">
    <property type="term" value="P:chorio-allantoic fusion"/>
    <property type="evidence" value="ECO:0000250"/>
    <property type="project" value="UniProtKB"/>
</dbReference>
<dbReference type="GO" id="GO:0060560">
    <property type="term" value="P:developmental growth involved in morphogenesis"/>
    <property type="evidence" value="ECO:0000250"/>
    <property type="project" value="UniProtKB"/>
</dbReference>
<dbReference type="GO" id="GO:0048568">
    <property type="term" value="P:embryonic organ development"/>
    <property type="evidence" value="ECO:0000250"/>
    <property type="project" value="UniProtKB"/>
</dbReference>
<dbReference type="GO" id="GO:0060669">
    <property type="term" value="P:embryonic placenta morphogenesis"/>
    <property type="evidence" value="ECO:0000250"/>
    <property type="project" value="UniProtKB"/>
</dbReference>
<dbReference type="GO" id="GO:0016332">
    <property type="term" value="P:establishment or maintenance of polarity of embryonic epithelium"/>
    <property type="evidence" value="ECO:0000250"/>
    <property type="project" value="UniProtKB"/>
</dbReference>
<dbReference type="GO" id="GO:0048144">
    <property type="term" value="P:fibroblast proliferation"/>
    <property type="evidence" value="ECO:0000270"/>
    <property type="project" value="UniProtKB"/>
</dbReference>
<dbReference type="GO" id="GO:0021871">
    <property type="term" value="P:forebrain regionalization"/>
    <property type="evidence" value="ECO:0000270"/>
    <property type="project" value="UniProtKB"/>
</dbReference>
<dbReference type="GO" id="GO:0042592">
    <property type="term" value="P:homeostatic process"/>
    <property type="evidence" value="ECO:0000250"/>
    <property type="project" value="UniProtKB"/>
</dbReference>
<dbReference type="GO" id="GO:0001701">
    <property type="term" value="P:in utero embryonic development"/>
    <property type="evidence" value="ECO:0000250"/>
    <property type="project" value="UniProtKB"/>
</dbReference>
<dbReference type="GO" id="GO:0072061">
    <property type="term" value="P:inner medullary collecting duct development"/>
    <property type="evidence" value="ECO:0000250"/>
    <property type="project" value="UniProtKB"/>
</dbReference>
<dbReference type="GO" id="GO:0032364">
    <property type="term" value="P:intracellular oxygen homeostasis"/>
    <property type="evidence" value="ECO:0000250"/>
    <property type="project" value="UniProtKB"/>
</dbReference>
<dbReference type="GO" id="GO:0070307">
    <property type="term" value="P:lens fiber cell development"/>
    <property type="evidence" value="ECO:0000250"/>
    <property type="project" value="BHF-UCL"/>
</dbReference>
<dbReference type="GO" id="GO:0060482">
    <property type="term" value="P:lobar bronchus development"/>
    <property type="evidence" value="ECO:0000250"/>
    <property type="project" value="UniProtKB"/>
</dbReference>
<dbReference type="GO" id="GO:0030324">
    <property type="term" value="P:lung development"/>
    <property type="evidence" value="ECO:0000250"/>
    <property type="project" value="UniProtKB"/>
</dbReference>
<dbReference type="GO" id="GO:0060428">
    <property type="term" value="P:lung epithelium development"/>
    <property type="evidence" value="ECO:0000250"/>
    <property type="project" value="UniProtKB"/>
</dbReference>
<dbReference type="GO" id="GO:0060425">
    <property type="term" value="P:lung morphogenesis"/>
    <property type="evidence" value="ECO:0000250"/>
    <property type="project" value="UniProtKB"/>
</dbReference>
<dbReference type="GO" id="GO:0061180">
    <property type="term" value="P:mammary gland epithelium development"/>
    <property type="evidence" value="ECO:0000270"/>
    <property type="project" value="UniProtKB"/>
</dbReference>
<dbReference type="GO" id="GO:0072205">
    <property type="term" value="P:metanephric collecting duct development"/>
    <property type="evidence" value="ECO:0000250"/>
    <property type="project" value="UniProtKB"/>
</dbReference>
<dbReference type="GO" id="GO:0072207">
    <property type="term" value="P:metanephric epithelium development"/>
    <property type="evidence" value="ECO:0000250"/>
    <property type="project" value="UniProtKB"/>
</dbReference>
<dbReference type="GO" id="GO:0072236">
    <property type="term" value="P:metanephric loop of Henle development"/>
    <property type="evidence" value="ECO:0000250"/>
    <property type="project" value="UniProtKB"/>
</dbReference>
<dbReference type="GO" id="GO:0003338">
    <property type="term" value="P:metanephros morphogenesis"/>
    <property type="evidence" value="ECO:0000250"/>
    <property type="project" value="UniProtKB"/>
</dbReference>
<dbReference type="GO" id="GO:0030182">
    <property type="term" value="P:neuron differentiation"/>
    <property type="evidence" value="ECO:0000270"/>
    <property type="project" value="UniProtKB"/>
</dbReference>
<dbReference type="GO" id="GO:0072060">
    <property type="term" value="P:outer medullary collecting duct development"/>
    <property type="evidence" value="ECO:0000250"/>
    <property type="project" value="UniProtKB"/>
</dbReference>
<dbReference type="GO" id="GO:0046330">
    <property type="term" value="P:positive regulation of JNK cascade"/>
    <property type="evidence" value="ECO:0000318"/>
    <property type="project" value="GO_Central"/>
</dbReference>
<dbReference type="GO" id="GO:0045669">
    <property type="term" value="P:positive regulation of osteoblast differentiation"/>
    <property type="evidence" value="ECO:0000250"/>
    <property type="project" value="UniProtKB"/>
</dbReference>
<dbReference type="GO" id="GO:0032536">
    <property type="term" value="P:regulation of cell projection size"/>
    <property type="evidence" value="ECO:0007669"/>
    <property type="project" value="Ensembl"/>
</dbReference>
<dbReference type="GO" id="GO:0072053">
    <property type="term" value="P:renal inner medulla development"/>
    <property type="evidence" value="ECO:0000250"/>
    <property type="project" value="UniProtKB"/>
</dbReference>
<dbReference type="GO" id="GO:0072054">
    <property type="term" value="P:renal outer medulla development"/>
    <property type="evidence" value="ECO:0000250"/>
    <property type="project" value="UniProtKB"/>
</dbReference>
<dbReference type="GO" id="GO:0051384">
    <property type="term" value="P:response to glucocorticoid"/>
    <property type="evidence" value="ECO:0007669"/>
    <property type="project" value="Ensembl"/>
</dbReference>
<dbReference type="GO" id="GO:0072089">
    <property type="term" value="P:stem cell proliferation"/>
    <property type="evidence" value="ECO:0000270"/>
    <property type="project" value="UniProtKB"/>
</dbReference>
<dbReference type="GO" id="GO:0050808">
    <property type="term" value="P:synapse organization"/>
    <property type="evidence" value="ECO:0000250"/>
    <property type="project" value="UniProtKB"/>
</dbReference>
<dbReference type="GO" id="GO:0060535">
    <property type="term" value="P:trachea cartilage morphogenesis"/>
    <property type="evidence" value="ECO:0000250"/>
    <property type="project" value="UniProtKB"/>
</dbReference>
<dbReference type="GO" id="GO:0016055">
    <property type="term" value="P:Wnt signaling pathway"/>
    <property type="evidence" value="ECO:0000250"/>
    <property type="project" value="UniProtKB"/>
</dbReference>
<dbReference type="GO" id="GO:0060071">
    <property type="term" value="P:Wnt signaling pathway, planar cell polarity pathway"/>
    <property type="evidence" value="ECO:0000250"/>
    <property type="project" value="ParkinsonsUK-UCL"/>
</dbReference>
<dbReference type="CDD" id="cd19350">
    <property type="entry name" value="wnt_Wnt7b"/>
    <property type="match status" value="1"/>
</dbReference>
<dbReference type="FunFam" id="3.30.2460.20:FF:000001">
    <property type="entry name" value="Wnt homolog"/>
    <property type="match status" value="1"/>
</dbReference>
<dbReference type="Gene3D" id="3.30.2460.20">
    <property type="match status" value="1"/>
</dbReference>
<dbReference type="InterPro" id="IPR005817">
    <property type="entry name" value="Wnt"/>
</dbReference>
<dbReference type="InterPro" id="IPR013300">
    <property type="entry name" value="Wnt7"/>
</dbReference>
<dbReference type="InterPro" id="IPR043158">
    <property type="entry name" value="Wnt_C"/>
</dbReference>
<dbReference type="InterPro" id="IPR018161">
    <property type="entry name" value="Wnt_CS"/>
</dbReference>
<dbReference type="PANTHER" id="PTHR12027:SF73">
    <property type="entry name" value="PROTEIN WNT-7B"/>
    <property type="match status" value="1"/>
</dbReference>
<dbReference type="PANTHER" id="PTHR12027">
    <property type="entry name" value="WNT RELATED"/>
    <property type="match status" value="1"/>
</dbReference>
<dbReference type="Pfam" id="PF00110">
    <property type="entry name" value="wnt"/>
    <property type="match status" value="1"/>
</dbReference>
<dbReference type="PRINTS" id="PR01891">
    <property type="entry name" value="WNT7PROTEIN"/>
</dbReference>
<dbReference type="PRINTS" id="PR01349">
    <property type="entry name" value="WNTPROTEIN"/>
</dbReference>
<dbReference type="SMART" id="SM00097">
    <property type="entry name" value="WNT1"/>
    <property type="match status" value="1"/>
</dbReference>
<dbReference type="PROSITE" id="PS00246">
    <property type="entry name" value="WNT1"/>
    <property type="match status" value="1"/>
</dbReference>
<comment type="function">
    <text evidence="3 8">Ligand for members of the frizzled family of seven transmembrane receptors that functions in the canonical Wnt/beta-catenin signaling pathway (PubMed:30026314). Required for normal fusion of the chorion and the allantois during placenta development (By similarity). Required for central nervous system (CNS) angiogenesis and blood-brain barrier regulation (PubMed:30026314).</text>
</comment>
<comment type="subunit">
    <text evidence="3 6 7 8">Forms a soluble 1:1 complex with AFM; this prevents oligomerization and is required for prolonged biological activity (PubMed:16227623). The complex with AFM may represent the physiological form in body fluids (PubMed:26902720). Interacts with FZD1 and FZD10. Interacts with FZD4 (in vitro). Interacts with PORCN (By similarity). Interacts with glypican GPC3 (PubMed:16227623). Interacts (via intrinsically disordered linker region) with RECK; interaction with RECK confers ligand selectivity for Wnt7 in brain endothelial cells and allows these cells to selectively respond to Wnt7 (PubMed:30026314).</text>
</comment>
<comment type="interaction">
    <interactant intactId="EBI-3913589">
        <id>P56706</id>
    </interactant>
    <interactant intactId="EBI-20720091">
        <id>Q9Z0J1</id>
        <label>Reck</label>
    </interactant>
    <organismsDiffer>true</organismsDiffer>
    <experiments>4</experiments>
</comment>
<comment type="subcellular location">
    <subcellularLocation>
        <location evidence="9">Secreted</location>
        <location evidence="9">Extracellular space</location>
        <location evidence="9">Extracellular matrix</location>
    </subcellularLocation>
    <subcellularLocation>
        <location evidence="7">Secreted</location>
    </subcellularLocation>
</comment>
<comment type="tissue specificity">
    <text>Moderately expressed in fetal brain, weakly expressed in fetal lung and kidney, and faintly expressed in adult brain, lung and prostate.</text>
</comment>
<comment type="domain">
    <text evidence="8">The intrinsically disordered linker region is required for recognition by RECK in brain endothelial cells.</text>
</comment>
<comment type="PTM">
    <text evidence="1 4">Palmitoleoylation is required for efficient binding to frizzled receptors. Depalmitoleoylation leads to Wnt signaling pathway inhibition.</text>
</comment>
<comment type="similarity">
    <text evidence="9">Belongs to the Wnt family.</text>
</comment>
<sequence>MHRNFRKWIFYVFLCFGVLYVKLGALSSVVALGANIICNKIPGLAPRQRAICQSRPDAIIVIGEGAQMGINECQYQFRFGRWNCSALGEKTVFGQELRVGSREAAFTYAITAAGVAHAVTAACSQGNLSNCGCDREKQGYYNQAEGWKWGGCSADVRYGIDFSRRFVDAREIKKNARRLMNLHNNEAGRKVLEDRMQLECKCHGVSGSCTTKTCWTTLPKFREVGHLLKEKYNAAVQVEVVRASRLRQPTFLRIKQLRSYQKPMETDLVYIEKSPNYCEEDAATGSVGTQGRLCNRTSPGADGCDTMCCGRGYNTHQYTKVWQCNCKFHWCCFVKCNTCSERTEVFTCK</sequence>
<feature type="signal peptide" evidence="5">
    <location>
        <begin position="1"/>
        <end position="24"/>
    </location>
</feature>
<feature type="chain" id="PRO_0000041444" description="Protein Wnt-7b">
    <location>
        <begin position="25"/>
        <end position="349"/>
    </location>
</feature>
<feature type="region of interest" description="Disordered linker" evidence="8">
    <location>
        <begin position="238"/>
        <end position="266"/>
    </location>
</feature>
<feature type="lipid moiety-binding region" description="O-palmitoleoyl serine; by PORCN" evidence="4">
    <location>
        <position position="206"/>
    </location>
</feature>
<feature type="glycosylation site" description="N-linked (GlcNAc...) asparagine" evidence="5">
    <location>
        <position position="83"/>
    </location>
</feature>
<feature type="glycosylation site" description="N-linked (GlcNAc...) asparagine" evidence="5">
    <location>
        <position position="127"/>
    </location>
</feature>
<feature type="glycosylation site" description="N-linked (GlcNAc...) asparagine" evidence="5">
    <location>
        <position position="295"/>
    </location>
</feature>
<feature type="disulfide bond" evidence="2">
    <location>
        <begin position="73"/>
        <end position="84"/>
    </location>
</feature>
<feature type="disulfide bond" evidence="2">
    <location>
        <begin position="123"/>
        <end position="131"/>
    </location>
</feature>
<feature type="disulfide bond" evidence="2">
    <location>
        <begin position="133"/>
        <end position="152"/>
    </location>
</feature>
<feature type="disulfide bond" evidence="2">
    <location>
        <begin position="200"/>
        <end position="214"/>
    </location>
</feature>
<feature type="disulfide bond" evidence="2">
    <location>
        <begin position="202"/>
        <end position="209"/>
    </location>
</feature>
<feature type="disulfide bond" evidence="2">
    <location>
        <begin position="278"/>
        <end position="309"/>
    </location>
</feature>
<feature type="disulfide bond" evidence="2">
    <location>
        <begin position="294"/>
        <end position="304"/>
    </location>
</feature>
<feature type="disulfide bond" evidence="2">
    <location>
        <begin position="308"/>
        <end position="348"/>
    </location>
</feature>
<feature type="disulfide bond" evidence="2">
    <location>
        <begin position="324"/>
        <end position="339"/>
    </location>
</feature>
<feature type="disulfide bond" evidence="2">
    <location>
        <begin position="326"/>
        <end position="336"/>
    </location>
</feature>
<feature type="disulfide bond" evidence="2">
    <location>
        <begin position="331"/>
        <end position="332"/>
    </location>
</feature>
<feature type="sequence conflict" description="In Ref. 5; no nucleotide entry." evidence="9" ref="5">
    <original>L</original>
    <variation>I</variation>
    <location>
        <position position="293"/>
    </location>
</feature>
<evidence type="ECO:0000250" key="1">
    <source>
        <dbReference type="UniProtKB" id="P27467"/>
    </source>
</evidence>
<evidence type="ECO:0000250" key="2">
    <source>
        <dbReference type="UniProtKB" id="P28026"/>
    </source>
</evidence>
<evidence type="ECO:0000250" key="3">
    <source>
        <dbReference type="UniProtKB" id="P28047"/>
    </source>
</evidence>
<evidence type="ECO:0000250" key="4">
    <source>
        <dbReference type="UniProtKB" id="P56704"/>
    </source>
</evidence>
<evidence type="ECO:0000255" key="5"/>
<evidence type="ECO:0000269" key="6">
    <source>
    </source>
</evidence>
<evidence type="ECO:0000269" key="7">
    <source>
    </source>
</evidence>
<evidence type="ECO:0000269" key="8">
    <source>
    </source>
</evidence>
<evidence type="ECO:0000305" key="9"/>
<accession>P56706</accession>
<accession>B8A596</accession>
<accession>Q96Q12</accession>
<gene>
    <name type="primary">WNT7B</name>
</gene>
<protein>
    <recommendedName>
        <fullName>Protein Wnt-7b</fullName>
    </recommendedName>
</protein>
<keyword id="KW-0217">Developmental protein</keyword>
<keyword id="KW-1015">Disulfide bond</keyword>
<keyword id="KW-0272">Extracellular matrix</keyword>
<keyword id="KW-0325">Glycoprotein</keyword>
<keyword id="KW-0449">Lipoprotein</keyword>
<keyword id="KW-1267">Proteomics identification</keyword>
<keyword id="KW-1185">Reference proteome</keyword>
<keyword id="KW-0964">Secreted</keyword>
<keyword id="KW-0732">Signal</keyword>
<keyword id="KW-0879">Wnt signaling pathway</keyword>
<reference key="1">
    <citation type="journal article" date="2001" name="Int. J. Oncol.">
        <title>Molecular cloning and characterization of human WNT7B.</title>
        <authorList>
            <person name="Kirikoshi H."/>
            <person name="Sekihara H."/>
            <person name="Katoh M."/>
        </authorList>
    </citation>
    <scope>NUCLEOTIDE SEQUENCE [MRNA]</scope>
</reference>
<reference key="2">
    <citation type="submission" date="2001-09" db="EMBL/GenBank/DDBJ databases">
        <authorList>
            <person name="Kim N.-S."/>
            <person name="Kim J.-M."/>
            <person name="Oh J.-H."/>
            <person name="Sohn H.-Y."/>
            <person name="Hahn Y."/>
            <person name="Kim Y.S."/>
        </authorList>
    </citation>
    <scope>NUCLEOTIDE SEQUENCE [MRNA]</scope>
</reference>
<reference key="3">
    <citation type="journal article" date="1999" name="Nature">
        <title>The DNA sequence of human chromosome 22.</title>
        <authorList>
            <person name="Dunham I."/>
            <person name="Hunt A.R."/>
            <person name="Collins J.E."/>
            <person name="Bruskiewich R."/>
            <person name="Beare D.M."/>
            <person name="Clamp M."/>
            <person name="Smink L.J."/>
            <person name="Ainscough R."/>
            <person name="Almeida J.P."/>
            <person name="Babbage A.K."/>
            <person name="Bagguley C."/>
            <person name="Bailey J."/>
            <person name="Barlow K.F."/>
            <person name="Bates K.N."/>
            <person name="Beasley O.P."/>
            <person name="Bird C.P."/>
            <person name="Blakey S.E."/>
            <person name="Bridgeman A.M."/>
            <person name="Buck D."/>
            <person name="Burgess J."/>
            <person name="Burrill W.D."/>
            <person name="Burton J."/>
            <person name="Carder C."/>
            <person name="Carter N.P."/>
            <person name="Chen Y."/>
            <person name="Clark G."/>
            <person name="Clegg S.M."/>
            <person name="Cobley V.E."/>
            <person name="Cole C.G."/>
            <person name="Collier R.E."/>
            <person name="Connor R."/>
            <person name="Conroy D."/>
            <person name="Corby N.R."/>
            <person name="Coville G.J."/>
            <person name="Cox A.V."/>
            <person name="Davis J."/>
            <person name="Dawson E."/>
            <person name="Dhami P.D."/>
            <person name="Dockree C."/>
            <person name="Dodsworth S.J."/>
            <person name="Durbin R.M."/>
            <person name="Ellington A.G."/>
            <person name="Evans K.L."/>
            <person name="Fey J.M."/>
            <person name="Fleming K."/>
            <person name="French L."/>
            <person name="Garner A.A."/>
            <person name="Gilbert J.G.R."/>
            <person name="Goward M.E."/>
            <person name="Grafham D.V."/>
            <person name="Griffiths M.N.D."/>
            <person name="Hall C."/>
            <person name="Hall R.E."/>
            <person name="Hall-Tamlyn G."/>
            <person name="Heathcott R.W."/>
            <person name="Ho S."/>
            <person name="Holmes S."/>
            <person name="Hunt S.E."/>
            <person name="Jones M.C."/>
            <person name="Kershaw J."/>
            <person name="Kimberley A.M."/>
            <person name="King A."/>
            <person name="Laird G.K."/>
            <person name="Langford C.F."/>
            <person name="Leversha M.A."/>
            <person name="Lloyd C."/>
            <person name="Lloyd D.M."/>
            <person name="Martyn I.D."/>
            <person name="Mashreghi-Mohammadi M."/>
            <person name="Matthews L.H."/>
            <person name="Mccann O.T."/>
            <person name="Mcclay J."/>
            <person name="Mclaren S."/>
            <person name="McMurray A.A."/>
            <person name="Milne S.A."/>
            <person name="Mortimore B.J."/>
            <person name="Odell C.N."/>
            <person name="Pavitt R."/>
            <person name="Pearce A.V."/>
            <person name="Pearson D."/>
            <person name="Phillimore B.J.C.T."/>
            <person name="Phillips S.H."/>
            <person name="Plumb R.W."/>
            <person name="Ramsay H."/>
            <person name="Ramsey Y."/>
            <person name="Rogers L."/>
            <person name="Ross M.T."/>
            <person name="Scott C.E."/>
            <person name="Sehra H.K."/>
            <person name="Skuce C.D."/>
            <person name="Smalley S."/>
            <person name="Smith M.L."/>
            <person name="Soderlund C."/>
            <person name="Spragon L."/>
            <person name="Steward C.A."/>
            <person name="Sulston J.E."/>
            <person name="Swann R.M."/>
            <person name="Vaudin M."/>
            <person name="Wall M."/>
            <person name="Wallis J.M."/>
            <person name="Whiteley M.N."/>
            <person name="Willey D.L."/>
            <person name="Williams L."/>
            <person name="Williams S.A."/>
            <person name="Williamson H."/>
            <person name="Wilmer T.E."/>
            <person name="Wilming L."/>
            <person name="Wright C.L."/>
            <person name="Hubbard T."/>
            <person name="Bentley D.R."/>
            <person name="Beck S."/>
            <person name="Rogers J."/>
            <person name="Shimizu N."/>
            <person name="Minoshima S."/>
            <person name="Kawasaki K."/>
            <person name="Sasaki T."/>
            <person name="Asakawa S."/>
            <person name="Kudoh J."/>
            <person name="Shintani A."/>
            <person name="Shibuya K."/>
            <person name="Yoshizaki Y."/>
            <person name="Aoki N."/>
            <person name="Mitsuyama S."/>
            <person name="Roe B.A."/>
            <person name="Chen F."/>
            <person name="Chu L."/>
            <person name="Crabtree J."/>
            <person name="Deschamps S."/>
            <person name="Do A."/>
            <person name="Do T."/>
            <person name="Dorman A."/>
            <person name="Fang F."/>
            <person name="Fu Y."/>
            <person name="Hu P."/>
            <person name="Hua A."/>
            <person name="Kenton S."/>
            <person name="Lai H."/>
            <person name="Lao H.I."/>
            <person name="Lewis J."/>
            <person name="Lewis S."/>
            <person name="Lin S.-P."/>
            <person name="Loh P."/>
            <person name="Malaj E."/>
            <person name="Nguyen T."/>
            <person name="Pan H."/>
            <person name="Phan S."/>
            <person name="Qi S."/>
            <person name="Qian Y."/>
            <person name="Ray L."/>
            <person name="Ren Q."/>
            <person name="Shaull S."/>
            <person name="Sloan D."/>
            <person name="Song L."/>
            <person name="Wang Q."/>
            <person name="Wang Y."/>
            <person name="Wang Z."/>
            <person name="White J."/>
            <person name="Willingham D."/>
            <person name="Wu H."/>
            <person name="Yao Z."/>
            <person name="Zhan M."/>
            <person name="Zhang G."/>
            <person name="Chissoe S."/>
            <person name="Murray J."/>
            <person name="Miller N."/>
            <person name="Minx P."/>
            <person name="Fulton R."/>
            <person name="Johnson D."/>
            <person name="Bemis G."/>
            <person name="Bentley D."/>
            <person name="Bradshaw H."/>
            <person name="Bourne S."/>
            <person name="Cordes M."/>
            <person name="Du Z."/>
            <person name="Fulton L."/>
            <person name="Goela D."/>
            <person name="Graves T."/>
            <person name="Hawkins J."/>
            <person name="Hinds K."/>
            <person name="Kemp K."/>
            <person name="Latreille P."/>
            <person name="Layman D."/>
            <person name="Ozersky P."/>
            <person name="Rohlfing T."/>
            <person name="Scheet P."/>
            <person name="Walker C."/>
            <person name="Wamsley A."/>
            <person name="Wohldmann P."/>
            <person name="Pepin K."/>
            <person name="Nelson J."/>
            <person name="Korf I."/>
            <person name="Bedell J.A."/>
            <person name="Hillier L.W."/>
            <person name="Mardis E."/>
            <person name="Waterston R."/>
            <person name="Wilson R."/>
            <person name="Emanuel B.S."/>
            <person name="Shaikh T."/>
            <person name="Kurahashi H."/>
            <person name="Saitta S."/>
            <person name="Budarf M.L."/>
            <person name="McDermid H.E."/>
            <person name="Johnson A."/>
            <person name="Wong A.C.C."/>
            <person name="Morrow B.E."/>
            <person name="Edelmann L."/>
            <person name="Kim U.J."/>
            <person name="Shizuya H."/>
            <person name="Simon M.I."/>
            <person name="Dumanski J.P."/>
            <person name="Peyrard M."/>
            <person name="Kedra D."/>
            <person name="Seroussi E."/>
            <person name="Fransson I."/>
            <person name="Tapia I."/>
            <person name="Bruder C.E."/>
            <person name="O'Brien K.P."/>
            <person name="Wilkinson P."/>
            <person name="Bodenteich A."/>
            <person name="Hartman K."/>
            <person name="Hu X."/>
            <person name="Khan A.S."/>
            <person name="Lane L."/>
            <person name="Tilahun Y."/>
            <person name="Wright H."/>
        </authorList>
    </citation>
    <scope>NUCLEOTIDE SEQUENCE [LARGE SCALE GENOMIC DNA]</scope>
</reference>
<reference key="4">
    <citation type="journal article" date="2004" name="Genome Res.">
        <title>The status, quality, and expansion of the NIH full-length cDNA project: the Mammalian Gene Collection (MGC).</title>
        <authorList>
            <consortium name="The MGC Project Team"/>
        </authorList>
    </citation>
    <scope>NUCLEOTIDE SEQUENCE [LARGE SCALE MRNA]</scope>
    <source>
        <tissue>Prostate</tissue>
    </source>
</reference>
<reference key="5">
    <citation type="journal article" date="1994" name="Cancer Res.">
        <title>Differential expression of human Wnt genes 2, 3, 4, and 7B in human breast cell lines and normal and disease states of human breast tissue.</title>
        <authorList>
            <person name="Huguet E.L."/>
            <person name="McMahon J.A."/>
            <person name="McMahon A.P."/>
            <person name="Bicknell R."/>
            <person name="Harris A.L."/>
        </authorList>
    </citation>
    <scope>NUCLEOTIDE SEQUENCE [MRNA] OF 204-327</scope>
    <source>
        <tissue>Mammary gland</tissue>
    </source>
</reference>
<reference key="6">
    <citation type="journal article" date="2005" name="J. Biol. Chem.">
        <title>Processing by convertases is not required for glypican-3-induced stimulation of hepatocellular carcinoma growth.</title>
        <authorList>
            <person name="Capurro M.I."/>
            <person name="Shi W."/>
            <person name="Sandal S."/>
            <person name="Filmus J."/>
        </authorList>
    </citation>
    <scope>INTERACTION WITH GPC3</scope>
</reference>
<reference key="7">
    <citation type="journal article" date="2016" name="Elife">
        <title>Active and water-soluble form of lipidated Wnt protein is maintained by a serum glycoprotein afamin/alpha-albumin.</title>
        <authorList>
            <person name="Mihara E."/>
            <person name="Hirai H."/>
            <person name="Yamamoto H."/>
            <person name="Tamura-Kawakami K."/>
            <person name="Matano M."/>
            <person name="Kikuchi A."/>
            <person name="Sato T."/>
            <person name="Takagi J."/>
        </authorList>
    </citation>
    <scope>INTERACTION WITH AFM</scope>
    <scope>SUBCELLULAR LOCATION</scope>
</reference>
<reference key="8">
    <citation type="journal article" date="2018" name="Science">
        <title>A molecular mechanism for Wnt ligand-specific signaling.</title>
        <authorList>
            <person name="Eubelen M."/>
            <person name="Bostaille N."/>
            <person name="Cabochette P."/>
            <person name="Gauquier A."/>
            <person name="Tebabi P."/>
            <person name="Dumitru A.C."/>
            <person name="Koehler M."/>
            <person name="Gut P."/>
            <person name="Alsteens D."/>
            <person name="Stainier D.Y.R."/>
            <person name="Garcia-Pino A."/>
            <person name="Vanhollebeke B."/>
        </authorList>
    </citation>
    <scope>FUNCTION</scope>
    <scope>INTERACTION WITH RECK</scope>
    <scope>DOMAIN</scope>
</reference>
<organism>
    <name type="scientific">Homo sapiens</name>
    <name type="common">Human</name>
    <dbReference type="NCBI Taxonomy" id="9606"/>
    <lineage>
        <taxon>Eukaryota</taxon>
        <taxon>Metazoa</taxon>
        <taxon>Chordata</taxon>
        <taxon>Craniata</taxon>
        <taxon>Vertebrata</taxon>
        <taxon>Euteleostomi</taxon>
        <taxon>Mammalia</taxon>
        <taxon>Eutheria</taxon>
        <taxon>Euarchontoglires</taxon>
        <taxon>Primates</taxon>
        <taxon>Haplorrhini</taxon>
        <taxon>Catarrhini</taxon>
        <taxon>Hominidae</taxon>
        <taxon>Homo</taxon>
    </lineage>
</organism>